<proteinExistence type="predicted"/>
<sequence length="100" mass="11176">MISGTVKPNFWSRLLLSIIAIFALPNAQSFENQNNTENYSSSVSIQQALETVKVAREVQRQAIPQPSISRQTEKQLKIQPHFFTEALNISAPIRAGPLLI</sequence>
<accession>P44073</accession>
<name>Y908_HAEIN</name>
<feature type="chain" id="PRO_0000077973" description="Uncharacterized protein HI_0908">
    <location>
        <begin position="1"/>
        <end position="100"/>
    </location>
</feature>
<reference key="1">
    <citation type="journal article" date="1995" name="Science">
        <title>Whole-genome random sequencing and assembly of Haemophilus influenzae Rd.</title>
        <authorList>
            <person name="Fleischmann R.D."/>
            <person name="Adams M.D."/>
            <person name="White O."/>
            <person name="Clayton R.A."/>
            <person name="Kirkness E.F."/>
            <person name="Kerlavage A.R."/>
            <person name="Bult C.J."/>
            <person name="Tomb J.-F."/>
            <person name="Dougherty B.A."/>
            <person name="Merrick J.M."/>
            <person name="McKenney K."/>
            <person name="Sutton G.G."/>
            <person name="FitzHugh W."/>
            <person name="Fields C.A."/>
            <person name="Gocayne J.D."/>
            <person name="Scott J.D."/>
            <person name="Shirley R."/>
            <person name="Liu L.-I."/>
            <person name="Glodek A."/>
            <person name="Kelley J.M."/>
            <person name="Weidman J.F."/>
            <person name="Phillips C.A."/>
            <person name="Spriggs T."/>
            <person name="Hedblom E."/>
            <person name="Cotton M.D."/>
            <person name="Utterback T.R."/>
            <person name="Hanna M.C."/>
            <person name="Nguyen D.T."/>
            <person name="Saudek D.M."/>
            <person name="Brandon R.C."/>
            <person name="Fine L.D."/>
            <person name="Fritchman J.L."/>
            <person name="Fuhrmann J.L."/>
            <person name="Geoghagen N.S.M."/>
            <person name="Gnehm C.L."/>
            <person name="McDonald L.A."/>
            <person name="Small K.V."/>
            <person name="Fraser C.M."/>
            <person name="Smith H.O."/>
            <person name="Venter J.C."/>
        </authorList>
    </citation>
    <scope>NUCLEOTIDE SEQUENCE [LARGE SCALE GENOMIC DNA]</scope>
    <source>
        <strain>ATCC 51907 / DSM 11121 / KW20 / Rd</strain>
    </source>
</reference>
<dbReference type="EMBL" id="L42023">
    <property type="protein sequence ID" value="AAC22570.1"/>
    <property type="molecule type" value="Genomic_DNA"/>
</dbReference>
<dbReference type="PIR" id="A64016">
    <property type="entry name" value="A64016"/>
</dbReference>
<dbReference type="RefSeq" id="NP_439068.1">
    <property type="nucleotide sequence ID" value="NC_000907.1"/>
</dbReference>
<dbReference type="STRING" id="71421.HI_0908"/>
<dbReference type="EnsemblBacteria" id="AAC22570">
    <property type="protein sequence ID" value="AAC22570"/>
    <property type="gene ID" value="HI_0908"/>
</dbReference>
<dbReference type="KEGG" id="hin:HI_0908"/>
<dbReference type="PATRIC" id="fig|71421.8.peg.949"/>
<dbReference type="eggNOG" id="ENOG5031M0Z">
    <property type="taxonomic scope" value="Bacteria"/>
</dbReference>
<dbReference type="HOGENOM" id="CLU_176769_0_0_6"/>
<dbReference type="OrthoDB" id="5679130at2"/>
<dbReference type="BioCyc" id="HINF71421:G1GJ1-947-MONOMER"/>
<dbReference type="Proteomes" id="UP000000579">
    <property type="component" value="Chromosome"/>
</dbReference>
<dbReference type="InterPro" id="IPR020508">
    <property type="entry name" value="SecM_small"/>
</dbReference>
<dbReference type="NCBIfam" id="NF038363">
    <property type="entry name" value="SecM_small"/>
    <property type="match status" value="1"/>
</dbReference>
<dbReference type="Pfam" id="PF10818">
    <property type="entry name" value="SecM_small"/>
    <property type="match status" value="1"/>
</dbReference>
<gene>
    <name type="ordered locus">HI_0908</name>
</gene>
<organism>
    <name type="scientific">Haemophilus influenzae (strain ATCC 51907 / DSM 11121 / KW20 / Rd)</name>
    <dbReference type="NCBI Taxonomy" id="71421"/>
    <lineage>
        <taxon>Bacteria</taxon>
        <taxon>Pseudomonadati</taxon>
        <taxon>Pseudomonadota</taxon>
        <taxon>Gammaproteobacteria</taxon>
        <taxon>Pasteurellales</taxon>
        <taxon>Pasteurellaceae</taxon>
        <taxon>Haemophilus</taxon>
    </lineage>
</organism>
<protein>
    <recommendedName>
        <fullName>Uncharacterized protein HI_0908</fullName>
    </recommendedName>
</protein>
<keyword id="KW-1185">Reference proteome</keyword>